<organism>
    <name type="scientific">Sulfurisphaera tokodaii (strain DSM 16993 / JCM 10545 / NBRC 100140 / 7)</name>
    <name type="common">Sulfolobus tokodaii</name>
    <dbReference type="NCBI Taxonomy" id="273063"/>
    <lineage>
        <taxon>Archaea</taxon>
        <taxon>Thermoproteota</taxon>
        <taxon>Thermoprotei</taxon>
        <taxon>Sulfolobales</taxon>
        <taxon>Sulfolobaceae</taxon>
        <taxon>Sulfurisphaera</taxon>
    </lineage>
</organism>
<keyword id="KW-0067">ATP-binding</keyword>
<keyword id="KW-0963">Cytoplasm</keyword>
<keyword id="KW-0418">Kinase</keyword>
<keyword id="KW-0460">Magnesium</keyword>
<keyword id="KW-0479">Metal-binding</keyword>
<keyword id="KW-0546">Nucleotide metabolism</keyword>
<keyword id="KW-0547">Nucleotide-binding</keyword>
<keyword id="KW-0597">Phosphoprotein</keyword>
<keyword id="KW-1185">Reference proteome</keyword>
<keyword id="KW-0808">Transferase</keyword>
<accession>Q976A0</accession>
<accession>F9VMS5</accession>
<name>NDK_SULTO</name>
<evidence type="ECO:0000255" key="1">
    <source>
        <dbReference type="HAMAP-Rule" id="MF_00451"/>
    </source>
</evidence>
<reference key="1">
    <citation type="journal article" date="2001" name="DNA Res.">
        <title>Complete genome sequence of an aerobic thermoacidophilic Crenarchaeon, Sulfolobus tokodaii strain7.</title>
        <authorList>
            <person name="Kawarabayasi Y."/>
            <person name="Hino Y."/>
            <person name="Horikawa H."/>
            <person name="Jin-no K."/>
            <person name="Takahashi M."/>
            <person name="Sekine M."/>
            <person name="Baba S."/>
            <person name="Ankai A."/>
            <person name="Kosugi H."/>
            <person name="Hosoyama A."/>
            <person name="Fukui S."/>
            <person name="Nagai Y."/>
            <person name="Nishijima K."/>
            <person name="Otsuka R."/>
            <person name="Nakazawa H."/>
            <person name="Takamiya M."/>
            <person name="Kato Y."/>
            <person name="Yoshizawa T."/>
            <person name="Tanaka T."/>
            <person name="Kudoh Y."/>
            <person name="Yamazaki J."/>
            <person name="Kushida N."/>
            <person name="Oguchi A."/>
            <person name="Aoki K."/>
            <person name="Masuda S."/>
            <person name="Yanagii M."/>
            <person name="Nishimura M."/>
            <person name="Yamagishi A."/>
            <person name="Oshima T."/>
            <person name="Kikuchi H."/>
        </authorList>
    </citation>
    <scope>NUCLEOTIDE SEQUENCE [LARGE SCALE GENOMIC DNA]</scope>
    <source>
        <strain>DSM 16993 / JCM 10545 / NBRC 100140 / 7</strain>
    </source>
</reference>
<comment type="function">
    <text evidence="1">Major role in the synthesis of nucleoside triphosphates other than ATP. The ATP gamma phosphate is transferred to the NDP beta phosphate via a ping-pong mechanism, using a phosphorylated active-site intermediate.</text>
</comment>
<comment type="catalytic activity">
    <reaction evidence="1">
        <text>a 2'-deoxyribonucleoside 5'-diphosphate + ATP = a 2'-deoxyribonucleoside 5'-triphosphate + ADP</text>
        <dbReference type="Rhea" id="RHEA:44640"/>
        <dbReference type="ChEBI" id="CHEBI:30616"/>
        <dbReference type="ChEBI" id="CHEBI:61560"/>
        <dbReference type="ChEBI" id="CHEBI:73316"/>
        <dbReference type="ChEBI" id="CHEBI:456216"/>
        <dbReference type="EC" id="2.7.4.6"/>
    </reaction>
</comment>
<comment type="catalytic activity">
    <reaction evidence="1">
        <text>a ribonucleoside 5'-diphosphate + ATP = a ribonucleoside 5'-triphosphate + ADP</text>
        <dbReference type="Rhea" id="RHEA:18113"/>
        <dbReference type="ChEBI" id="CHEBI:30616"/>
        <dbReference type="ChEBI" id="CHEBI:57930"/>
        <dbReference type="ChEBI" id="CHEBI:61557"/>
        <dbReference type="ChEBI" id="CHEBI:456216"/>
        <dbReference type="EC" id="2.7.4.6"/>
    </reaction>
</comment>
<comment type="cofactor">
    <cofactor evidence="1">
        <name>Mg(2+)</name>
        <dbReference type="ChEBI" id="CHEBI:18420"/>
    </cofactor>
</comment>
<comment type="subcellular location">
    <subcellularLocation>
        <location evidence="1">Cytoplasm</location>
    </subcellularLocation>
</comment>
<comment type="similarity">
    <text evidence="1">Belongs to the NDK family.</text>
</comment>
<feature type="chain" id="PRO_0000137103" description="Nucleoside diphosphate kinase">
    <location>
        <begin position="1"/>
        <end position="147"/>
    </location>
</feature>
<feature type="active site" description="Pros-phosphohistidine intermediate" evidence="1">
    <location>
        <position position="117"/>
    </location>
</feature>
<feature type="binding site" evidence="1">
    <location>
        <position position="11"/>
    </location>
    <ligand>
        <name>ATP</name>
        <dbReference type="ChEBI" id="CHEBI:30616"/>
    </ligand>
</feature>
<feature type="binding site" evidence="1">
    <location>
        <position position="59"/>
    </location>
    <ligand>
        <name>ATP</name>
        <dbReference type="ChEBI" id="CHEBI:30616"/>
    </ligand>
</feature>
<feature type="binding site" evidence="1">
    <location>
        <position position="87"/>
    </location>
    <ligand>
        <name>ATP</name>
        <dbReference type="ChEBI" id="CHEBI:30616"/>
    </ligand>
</feature>
<feature type="binding site" evidence="1">
    <location>
        <position position="93"/>
    </location>
    <ligand>
        <name>ATP</name>
        <dbReference type="ChEBI" id="CHEBI:30616"/>
    </ligand>
</feature>
<feature type="binding site" evidence="1">
    <location>
        <position position="104"/>
    </location>
    <ligand>
        <name>ATP</name>
        <dbReference type="ChEBI" id="CHEBI:30616"/>
    </ligand>
</feature>
<feature type="binding site" evidence="1">
    <location>
        <position position="114"/>
    </location>
    <ligand>
        <name>ATP</name>
        <dbReference type="ChEBI" id="CHEBI:30616"/>
    </ligand>
</feature>
<protein>
    <recommendedName>
        <fullName evidence="1">Nucleoside diphosphate kinase</fullName>
        <shortName evidence="1">NDK</shortName>
        <shortName evidence="1">NDP kinase</shortName>
        <ecNumber evidence="1">2.7.4.6</ecNumber>
    </recommendedName>
    <alternativeName>
        <fullName evidence="1">Nucleoside-2-P kinase</fullName>
    </alternativeName>
</protein>
<gene>
    <name evidence="1" type="primary">ndk</name>
    <name type="ordered locus">STK_02800</name>
</gene>
<dbReference type="EC" id="2.7.4.6" evidence="1"/>
<dbReference type="EMBL" id="BA000023">
    <property type="protein sequence ID" value="BAK54221.1"/>
    <property type="molecule type" value="Genomic_DNA"/>
</dbReference>
<dbReference type="RefSeq" id="WP_052846241.1">
    <property type="nucleotide sequence ID" value="NC_003106.2"/>
</dbReference>
<dbReference type="SMR" id="Q976A0"/>
<dbReference type="STRING" id="273063.STK_02800"/>
<dbReference type="GeneID" id="95643643"/>
<dbReference type="KEGG" id="sto:STK_02800"/>
<dbReference type="PATRIC" id="fig|273063.9.peg.332"/>
<dbReference type="eggNOG" id="arCOG04313">
    <property type="taxonomic scope" value="Archaea"/>
</dbReference>
<dbReference type="OrthoDB" id="6874at2157"/>
<dbReference type="Proteomes" id="UP000001015">
    <property type="component" value="Chromosome"/>
</dbReference>
<dbReference type="GO" id="GO:0005737">
    <property type="term" value="C:cytoplasm"/>
    <property type="evidence" value="ECO:0007669"/>
    <property type="project" value="UniProtKB-SubCell"/>
</dbReference>
<dbReference type="GO" id="GO:0005524">
    <property type="term" value="F:ATP binding"/>
    <property type="evidence" value="ECO:0007669"/>
    <property type="project" value="UniProtKB-UniRule"/>
</dbReference>
<dbReference type="GO" id="GO:0046872">
    <property type="term" value="F:metal ion binding"/>
    <property type="evidence" value="ECO:0007669"/>
    <property type="project" value="UniProtKB-KW"/>
</dbReference>
<dbReference type="GO" id="GO:0004550">
    <property type="term" value="F:nucleoside diphosphate kinase activity"/>
    <property type="evidence" value="ECO:0007669"/>
    <property type="project" value="UniProtKB-UniRule"/>
</dbReference>
<dbReference type="GO" id="GO:0006241">
    <property type="term" value="P:CTP biosynthetic process"/>
    <property type="evidence" value="ECO:0007669"/>
    <property type="project" value="UniProtKB-UniRule"/>
</dbReference>
<dbReference type="GO" id="GO:0006183">
    <property type="term" value="P:GTP biosynthetic process"/>
    <property type="evidence" value="ECO:0007669"/>
    <property type="project" value="UniProtKB-UniRule"/>
</dbReference>
<dbReference type="GO" id="GO:0006228">
    <property type="term" value="P:UTP biosynthetic process"/>
    <property type="evidence" value="ECO:0007669"/>
    <property type="project" value="UniProtKB-UniRule"/>
</dbReference>
<dbReference type="CDD" id="cd04413">
    <property type="entry name" value="NDPk_I"/>
    <property type="match status" value="1"/>
</dbReference>
<dbReference type="FunFam" id="3.30.70.141:FF:000003">
    <property type="entry name" value="Nucleoside diphosphate kinase"/>
    <property type="match status" value="1"/>
</dbReference>
<dbReference type="Gene3D" id="3.30.70.141">
    <property type="entry name" value="Nucleoside diphosphate kinase-like domain"/>
    <property type="match status" value="1"/>
</dbReference>
<dbReference type="HAMAP" id="MF_00451">
    <property type="entry name" value="NDP_kinase"/>
    <property type="match status" value="1"/>
</dbReference>
<dbReference type="InterPro" id="IPR034907">
    <property type="entry name" value="NDK-like_dom"/>
</dbReference>
<dbReference type="InterPro" id="IPR036850">
    <property type="entry name" value="NDK-like_dom_sf"/>
</dbReference>
<dbReference type="InterPro" id="IPR001564">
    <property type="entry name" value="Nucleoside_diP_kinase"/>
</dbReference>
<dbReference type="InterPro" id="IPR023005">
    <property type="entry name" value="Nucleoside_diP_kinase_AS"/>
</dbReference>
<dbReference type="NCBIfam" id="NF001908">
    <property type="entry name" value="PRK00668.1"/>
    <property type="match status" value="1"/>
</dbReference>
<dbReference type="PANTHER" id="PTHR11349">
    <property type="entry name" value="NUCLEOSIDE DIPHOSPHATE KINASE"/>
    <property type="match status" value="1"/>
</dbReference>
<dbReference type="Pfam" id="PF00334">
    <property type="entry name" value="NDK"/>
    <property type="match status" value="1"/>
</dbReference>
<dbReference type="PRINTS" id="PR01243">
    <property type="entry name" value="NUCDPKINASE"/>
</dbReference>
<dbReference type="SMART" id="SM00562">
    <property type="entry name" value="NDK"/>
    <property type="match status" value="1"/>
</dbReference>
<dbReference type="SUPFAM" id="SSF54919">
    <property type="entry name" value="Nucleoside diphosphate kinase, NDK"/>
    <property type="match status" value="1"/>
</dbReference>
<dbReference type="PROSITE" id="PS00469">
    <property type="entry name" value="NDPK"/>
    <property type="match status" value="1"/>
</dbReference>
<dbReference type="PROSITE" id="PS51374">
    <property type="entry name" value="NDPK_LIKE"/>
    <property type="match status" value="1"/>
</dbReference>
<proteinExistence type="inferred from homology"/>
<sequence length="147" mass="16624">MSIQRTFVMIKPDGVRRNLIGEIISRFEKRGLKIIGLKMVKIDRPTAERLYEEHKGKSFFEELISYITSGPVVCMVIEGDEAVSVVRKMIGNTDPKEAPPGTIRGDYALSKAENVIHASDSEEKAKREMSIFFKEEELVTPLAQVHM</sequence>